<organism>
    <name type="scientific">Staphylococcus aureus (strain NCTC 8325 / PS 47)</name>
    <dbReference type="NCBI Taxonomy" id="93061"/>
    <lineage>
        <taxon>Bacteria</taxon>
        <taxon>Bacillati</taxon>
        <taxon>Bacillota</taxon>
        <taxon>Bacilli</taxon>
        <taxon>Bacillales</taxon>
        <taxon>Staphylococcaceae</taxon>
        <taxon>Staphylococcus</taxon>
    </lineage>
</organism>
<comment type="function">
    <text evidence="1">Catalyzes the conversion of inosine 5'-phosphate (IMP) to xanthosine 5'-phosphate (XMP), the first committed and rate-limiting step in the de novo synthesis of guanine nucleotides, and therefore plays an important role in the regulation of cell growth.</text>
</comment>
<comment type="catalytic activity">
    <reaction evidence="1">
        <text>IMP + NAD(+) + H2O = XMP + NADH + H(+)</text>
        <dbReference type="Rhea" id="RHEA:11708"/>
        <dbReference type="ChEBI" id="CHEBI:15377"/>
        <dbReference type="ChEBI" id="CHEBI:15378"/>
        <dbReference type="ChEBI" id="CHEBI:57464"/>
        <dbReference type="ChEBI" id="CHEBI:57540"/>
        <dbReference type="ChEBI" id="CHEBI:57945"/>
        <dbReference type="ChEBI" id="CHEBI:58053"/>
        <dbReference type="EC" id="1.1.1.205"/>
    </reaction>
</comment>
<comment type="cofactor">
    <cofactor evidence="1">
        <name>K(+)</name>
        <dbReference type="ChEBI" id="CHEBI:29103"/>
    </cofactor>
</comment>
<comment type="activity regulation">
    <text evidence="1">Mycophenolic acid (MPA) is a non-competitive inhibitor that prevents formation of the closed enzyme conformation by binding to the same site as the amobile flap. In contrast, mizoribine monophosphate (MZP) is a competitive inhibitor that induces the closed conformation. MPA is a potent inhibitor of mammalian IMPDHs but a poor inhibitor of the bacterial enzymes. MZP is a more potent inhibitor of bacterial IMPDH.</text>
</comment>
<comment type="pathway">
    <text evidence="1">Purine metabolism; XMP biosynthesis via de novo pathway; XMP from IMP: step 1/1.</text>
</comment>
<comment type="subunit">
    <text evidence="1">Homotetramer.</text>
</comment>
<comment type="similarity">
    <text evidence="1">Belongs to the IMPDH/GMPR family.</text>
</comment>
<keyword id="KW-0002">3D-structure</keyword>
<keyword id="KW-0129">CBS domain</keyword>
<keyword id="KW-0332">GMP biosynthesis</keyword>
<keyword id="KW-0479">Metal-binding</keyword>
<keyword id="KW-0520">NAD</keyword>
<keyword id="KW-0560">Oxidoreductase</keyword>
<keyword id="KW-0630">Potassium</keyword>
<keyword id="KW-0658">Purine biosynthesis</keyword>
<keyword id="KW-1185">Reference proteome</keyword>
<keyword id="KW-0677">Repeat</keyword>
<name>IMDH_STAA8</name>
<protein>
    <recommendedName>
        <fullName evidence="1">Inosine-5'-monophosphate dehydrogenase</fullName>
        <shortName evidence="1">IMP dehydrogenase</shortName>
        <shortName evidence="1">IMPD</shortName>
        <shortName evidence="1">IMPDH</shortName>
        <ecNumber evidence="1">1.1.1.205</ecNumber>
    </recommendedName>
</protein>
<dbReference type="EC" id="1.1.1.205" evidence="1"/>
<dbReference type="EMBL" id="CP000253">
    <property type="protein sequence ID" value="ABD29540.1"/>
    <property type="molecule type" value="Genomic_DNA"/>
</dbReference>
<dbReference type="RefSeq" id="WP_000264071.1">
    <property type="nucleotide sequence ID" value="NZ_LS483365.1"/>
</dbReference>
<dbReference type="RefSeq" id="YP_498963.1">
    <property type="nucleotide sequence ID" value="NC_007795.1"/>
</dbReference>
<dbReference type="PDB" id="9AUY">
    <property type="method" value="X-ray"/>
    <property type="resolution" value="1.94 A"/>
    <property type="chains" value="A=2-91, A=220-488"/>
</dbReference>
<dbReference type="PDB" id="9AUZ">
    <property type="method" value="X-ray"/>
    <property type="resolution" value="1.94 A"/>
    <property type="chains" value="A=2-91, A=220-488"/>
</dbReference>
<dbReference type="PDB" id="9AV0">
    <property type="method" value="X-ray"/>
    <property type="resolution" value="2.20 A"/>
    <property type="chains" value="A=2-91, A=220-488"/>
</dbReference>
<dbReference type="PDBsum" id="9AUY"/>
<dbReference type="PDBsum" id="9AUZ"/>
<dbReference type="PDBsum" id="9AV0"/>
<dbReference type="SMR" id="Q2G0Y7"/>
<dbReference type="STRING" id="93061.SAOUHSC_00374"/>
<dbReference type="PaxDb" id="1280-SAXN108_0439"/>
<dbReference type="GeneID" id="3919793"/>
<dbReference type="GeneID" id="66838696"/>
<dbReference type="KEGG" id="sao:SAOUHSC_00374"/>
<dbReference type="PATRIC" id="fig|93061.5.peg.344"/>
<dbReference type="eggNOG" id="COG0516">
    <property type="taxonomic scope" value="Bacteria"/>
</dbReference>
<dbReference type="eggNOG" id="COG0517">
    <property type="taxonomic scope" value="Bacteria"/>
</dbReference>
<dbReference type="HOGENOM" id="CLU_022552_1_0_9"/>
<dbReference type="OrthoDB" id="9805398at2"/>
<dbReference type="UniPathway" id="UPA00601">
    <property type="reaction ID" value="UER00295"/>
</dbReference>
<dbReference type="PRO" id="PR:Q2G0Y7"/>
<dbReference type="Proteomes" id="UP000008816">
    <property type="component" value="Chromosome"/>
</dbReference>
<dbReference type="GO" id="GO:0003938">
    <property type="term" value="F:IMP dehydrogenase activity"/>
    <property type="evidence" value="ECO:0000318"/>
    <property type="project" value="GO_Central"/>
</dbReference>
<dbReference type="GO" id="GO:0046872">
    <property type="term" value="F:metal ion binding"/>
    <property type="evidence" value="ECO:0007669"/>
    <property type="project" value="UniProtKB-UniRule"/>
</dbReference>
<dbReference type="GO" id="GO:0000166">
    <property type="term" value="F:nucleotide binding"/>
    <property type="evidence" value="ECO:0007669"/>
    <property type="project" value="UniProtKB-UniRule"/>
</dbReference>
<dbReference type="GO" id="GO:0006177">
    <property type="term" value="P:GMP biosynthetic process"/>
    <property type="evidence" value="ECO:0007669"/>
    <property type="project" value="UniProtKB-UniRule"/>
</dbReference>
<dbReference type="GO" id="GO:0006183">
    <property type="term" value="P:GTP biosynthetic process"/>
    <property type="evidence" value="ECO:0000318"/>
    <property type="project" value="GO_Central"/>
</dbReference>
<dbReference type="CDD" id="cd04601">
    <property type="entry name" value="CBS_pair_IMPDH"/>
    <property type="match status" value="1"/>
</dbReference>
<dbReference type="CDD" id="cd00381">
    <property type="entry name" value="IMPDH"/>
    <property type="match status" value="1"/>
</dbReference>
<dbReference type="FunFam" id="3.20.20.70:FF:000003">
    <property type="entry name" value="GMP reductase"/>
    <property type="match status" value="1"/>
</dbReference>
<dbReference type="Gene3D" id="3.20.20.70">
    <property type="entry name" value="Aldolase class I"/>
    <property type="match status" value="1"/>
</dbReference>
<dbReference type="HAMAP" id="MF_01964">
    <property type="entry name" value="IMPDH"/>
    <property type="match status" value="1"/>
</dbReference>
<dbReference type="InterPro" id="IPR013785">
    <property type="entry name" value="Aldolase_TIM"/>
</dbReference>
<dbReference type="InterPro" id="IPR000644">
    <property type="entry name" value="CBS_dom"/>
</dbReference>
<dbReference type="InterPro" id="IPR046342">
    <property type="entry name" value="CBS_dom_sf"/>
</dbReference>
<dbReference type="InterPro" id="IPR005990">
    <property type="entry name" value="IMP_DH"/>
</dbReference>
<dbReference type="InterPro" id="IPR015875">
    <property type="entry name" value="IMP_DH/GMP_Rdtase_CS"/>
</dbReference>
<dbReference type="InterPro" id="IPR001093">
    <property type="entry name" value="IMP_DH_GMPRt"/>
</dbReference>
<dbReference type="NCBIfam" id="TIGR01302">
    <property type="entry name" value="IMP_dehydrog"/>
    <property type="match status" value="1"/>
</dbReference>
<dbReference type="PANTHER" id="PTHR11911:SF111">
    <property type="entry name" value="INOSINE-5'-MONOPHOSPHATE DEHYDROGENASE"/>
    <property type="match status" value="1"/>
</dbReference>
<dbReference type="PANTHER" id="PTHR11911">
    <property type="entry name" value="INOSINE-5-MONOPHOSPHATE DEHYDROGENASE RELATED"/>
    <property type="match status" value="1"/>
</dbReference>
<dbReference type="Pfam" id="PF00571">
    <property type="entry name" value="CBS"/>
    <property type="match status" value="2"/>
</dbReference>
<dbReference type="Pfam" id="PF00478">
    <property type="entry name" value="IMPDH"/>
    <property type="match status" value="1"/>
</dbReference>
<dbReference type="PIRSF" id="PIRSF000130">
    <property type="entry name" value="IMPDH"/>
    <property type="match status" value="1"/>
</dbReference>
<dbReference type="SMART" id="SM00116">
    <property type="entry name" value="CBS"/>
    <property type="match status" value="2"/>
</dbReference>
<dbReference type="SMART" id="SM01240">
    <property type="entry name" value="IMPDH"/>
    <property type="match status" value="1"/>
</dbReference>
<dbReference type="SUPFAM" id="SSF54631">
    <property type="entry name" value="CBS-domain pair"/>
    <property type="match status" value="1"/>
</dbReference>
<dbReference type="SUPFAM" id="SSF51412">
    <property type="entry name" value="Inosine monophosphate dehydrogenase (IMPDH)"/>
    <property type="match status" value="1"/>
</dbReference>
<dbReference type="PROSITE" id="PS51371">
    <property type="entry name" value="CBS"/>
    <property type="match status" value="2"/>
</dbReference>
<dbReference type="PROSITE" id="PS00487">
    <property type="entry name" value="IMP_DH_GMP_RED"/>
    <property type="match status" value="1"/>
</dbReference>
<accession>Q2G0Y7</accession>
<reference key="1">
    <citation type="book" date="2006" name="Gram positive pathogens, 2nd edition">
        <title>The Staphylococcus aureus NCTC 8325 genome.</title>
        <editorList>
            <person name="Fischetti V."/>
            <person name="Novick R."/>
            <person name="Ferretti J."/>
            <person name="Portnoy D."/>
            <person name="Rood J."/>
        </editorList>
        <authorList>
            <person name="Gillaspy A.F."/>
            <person name="Worrell V."/>
            <person name="Orvis J."/>
            <person name="Roe B.A."/>
            <person name="Dyer D.W."/>
            <person name="Iandolo J.J."/>
        </authorList>
    </citation>
    <scope>NUCLEOTIDE SEQUENCE [LARGE SCALE GENOMIC DNA]</scope>
    <source>
        <strain>NCTC 8325 / PS 47</strain>
    </source>
</reference>
<evidence type="ECO:0000255" key="1">
    <source>
        <dbReference type="HAMAP-Rule" id="MF_01964"/>
    </source>
</evidence>
<evidence type="ECO:0000256" key="2">
    <source>
        <dbReference type="SAM" id="MobiDB-lite"/>
    </source>
</evidence>
<sequence length="488" mass="52851">MWESKFAKESLTFDDVLLIPAQSDILPKDVDLSVQLSDKVKLNIPVISAGMDTVTESKMAIAMARQGGLGVIHKNMGVEEQADEVQKVKRSENGVISNPFFLTPEESVYEAEALMGKYRISGVPIVDNKEDRNLVGILTNRDLRFIEDFSIKIVDVMTQENLITAPVNTTLEEAEKILQKHKIEKLPLVKDGRLEGLITIKDIEKVIEFPNAAKDEHGRLLVAAAIGISKDTDIRAQKLVEAGVDVLVIDTAHGHSKGVIDQVKHIKKTYPEITLVAGNVATAEATKDLFEAGADIVKVGIGPGSICTTRVVAGVGVPQITAIYDCATEARKHGKAIIADGGIKFSGDIIKALAAGGHAVMLGSLLAGTEESPGATEIFQGRQYKVYRGMGSLGAMEKGSNDRYFQEDKAPKKFVPEGIEGRTAYKGALQDTIYQLMGGVRAGMGYTGSHDLRELREEAQFTRMGPAGLAESHPHNIQITKESPNYSF</sequence>
<feature type="chain" id="PRO_0000287360" description="Inosine-5'-monophosphate dehydrogenase">
    <location>
        <begin position="1"/>
        <end position="488"/>
    </location>
</feature>
<feature type="domain" description="CBS 1" evidence="1">
    <location>
        <begin position="95"/>
        <end position="153"/>
    </location>
</feature>
<feature type="domain" description="CBS 2" evidence="1">
    <location>
        <begin position="157"/>
        <end position="216"/>
    </location>
</feature>
<feature type="region of interest" description="Disordered" evidence="2">
    <location>
        <begin position="468"/>
        <end position="488"/>
    </location>
</feature>
<feature type="compositionally biased region" description="Polar residues" evidence="2">
    <location>
        <begin position="475"/>
        <end position="488"/>
    </location>
</feature>
<feature type="active site" description="Thioimidate intermediate" evidence="1">
    <location>
        <position position="307"/>
    </location>
</feature>
<feature type="active site" description="Proton acceptor" evidence="1">
    <location>
        <position position="403"/>
    </location>
</feature>
<feature type="binding site" evidence="1">
    <location>
        <position position="250"/>
    </location>
    <ligand>
        <name>NAD(+)</name>
        <dbReference type="ChEBI" id="CHEBI:57540"/>
    </ligand>
</feature>
<feature type="binding site" evidence="1">
    <location>
        <begin position="300"/>
        <end position="302"/>
    </location>
    <ligand>
        <name>NAD(+)</name>
        <dbReference type="ChEBI" id="CHEBI:57540"/>
    </ligand>
</feature>
<feature type="binding site" description="in other chain" evidence="1">
    <location>
        <position position="302"/>
    </location>
    <ligand>
        <name>K(+)</name>
        <dbReference type="ChEBI" id="CHEBI:29103"/>
        <note>ligand shared between two tetrameric partners</note>
    </ligand>
</feature>
<feature type="binding site" description="in other chain" evidence="1">
    <location>
        <position position="304"/>
    </location>
    <ligand>
        <name>K(+)</name>
        <dbReference type="ChEBI" id="CHEBI:29103"/>
        <note>ligand shared between two tetrameric partners</note>
    </ligand>
</feature>
<feature type="binding site" evidence="1">
    <location>
        <position position="305"/>
    </location>
    <ligand>
        <name>IMP</name>
        <dbReference type="ChEBI" id="CHEBI:58053"/>
    </ligand>
</feature>
<feature type="binding site" description="in other chain" evidence="1">
    <location>
        <position position="307"/>
    </location>
    <ligand>
        <name>K(+)</name>
        <dbReference type="ChEBI" id="CHEBI:29103"/>
        <note>ligand shared between two tetrameric partners</note>
    </ligand>
</feature>
<feature type="binding site" evidence="1">
    <location>
        <begin position="340"/>
        <end position="342"/>
    </location>
    <ligand>
        <name>IMP</name>
        <dbReference type="ChEBI" id="CHEBI:58053"/>
    </ligand>
</feature>
<feature type="binding site" evidence="1">
    <location>
        <begin position="363"/>
        <end position="364"/>
    </location>
    <ligand>
        <name>IMP</name>
        <dbReference type="ChEBI" id="CHEBI:58053"/>
    </ligand>
</feature>
<feature type="binding site" evidence="1">
    <location>
        <begin position="387"/>
        <end position="391"/>
    </location>
    <ligand>
        <name>IMP</name>
        <dbReference type="ChEBI" id="CHEBI:58053"/>
    </ligand>
</feature>
<feature type="binding site" evidence="1">
    <location>
        <position position="417"/>
    </location>
    <ligand>
        <name>IMP</name>
        <dbReference type="ChEBI" id="CHEBI:58053"/>
    </ligand>
</feature>
<feature type="binding site" evidence="1">
    <location>
        <position position="471"/>
    </location>
    <ligand>
        <name>K(+)</name>
        <dbReference type="ChEBI" id="CHEBI:29103"/>
        <note>ligand shared between two tetrameric partners</note>
    </ligand>
</feature>
<feature type="binding site" evidence="1">
    <location>
        <position position="472"/>
    </location>
    <ligand>
        <name>K(+)</name>
        <dbReference type="ChEBI" id="CHEBI:29103"/>
        <note>ligand shared between two tetrameric partners</note>
    </ligand>
</feature>
<feature type="binding site" evidence="1">
    <location>
        <position position="473"/>
    </location>
    <ligand>
        <name>K(+)</name>
        <dbReference type="ChEBI" id="CHEBI:29103"/>
        <note>ligand shared between two tetrameric partners</note>
    </ligand>
</feature>
<proteinExistence type="evidence at protein level"/>
<gene>
    <name evidence="1" type="primary">guaB</name>
    <name type="ordered locus">SAOUHSC_00374</name>
</gene>